<proteinExistence type="inferred from homology"/>
<organism>
    <name type="scientific">Neosartorya fischeri (strain ATCC 1020 / DSM 3700 / CBS 544.65 / FGSC A1164 / JCM 1740 / NRRL 181 / WB 181)</name>
    <name type="common">Aspergillus fischerianus</name>
    <dbReference type="NCBI Taxonomy" id="331117"/>
    <lineage>
        <taxon>Eukaryota</taxon>
        <taxon>Fungi</taxon>
        <taxon>Dikarya</taxon>
        <taxon>Ascomycota</taxon>
        <taxon>Pezizomycotina</taxon>
        <taxon>Eurotiomycetes</taxon>
        <taxon>Eurotiomycetidae</taxon>
        <taxon>Eurotiales</taxon>
        <taxon>Aspergillaceae</taxon>
        <taxon>Aspergillus</taxon>
        <taxon>Aspergillus subgen. Fumigati</taxon>
    </lineage>
</organism>
<evidence type="ECO:0000250" key="1"/>
<evidence type="ECO:0000255" key="2"/>
<evidence type="ECO:0000256" key="3">
    <source>
        <dbReference type="SAM" id="MobiDB-lite"/>
    </source>
</evidence>
<evidence type="ECO:0000305" key="4"/>
<name>DAPB_NEOFI</name>
<protein>
    <recommendedName>
        <fullName>Probable dipeptidyl-aminopeptidase B</fullName>
        <shortName>DPAP B</shortName>
        <ecNumber>3.4.14.5</ecNumber>
    </recommendedName>
</protein>
<accession>A1D7R6</accession>
<reference key="1">
    <citation type="journal article" date="2008" name="PLoS Genet.">
        <title>Genomic islands in the pathogenic filamentous fungus Aspergillus fumigatus.</title>
        <authorList>
            <person name="Fedorova N.D."/>
            <person name="Khaldi N."/>
            <person name="Joardar V.S."/>
            <person name="Maiti R."/>
            <person name="Amedeo P."/>
            <person name="Anderson M.J."/>
            <person name="Crabtree J."/>
            <person name="Silva J.C."/>
            <person name="Badger J.H."/>
            <person name="Albarraq A."/>
            <person name="Angiuoli S."/>
            <person name="Bussey H."/>
            <person name="Bowyer P."/>
            <person name="Cotty P.J."/>
            <person name="Dyer P.S."/>
            <person name="Egan A."/>
            <person name="Galens K."/>
            <person name="Fraser-Liggett C.M."/>
            <person name="Haas B.J."/>
            <person name="Inman J.M."/>
            <person name="Kent R."/>
            <person name="Lemieux S."/>
            <person name="Malavazi I."/>
            <person name="Orvis J."/>
            <person name="Roemer T."/>
            <person name="Ronning C.M."/>
            <person name="Sundaram J.P."/>
            <person name="Sutton G."/>
            <person name="Turner G."/>
            <person name="Venter J.C."/>
            <person name="White O.R."/>
            <person name="Whitty B.R."/>
            <person name="Youngman P."/>
            <person name="Wolfe K.H."/>
            <person name="Goldman G.H."/>
            <person name="Wortman J.R."/>
            <person name="Jiang B."/>
            <person name="Denning D.W."/>
            <person name="Nierman W.C."/>
        </authorList>
    </citation>
    <scope>NUCLEOTIDE SEQUENCE [LARGE SCALE GENOMIC DNA]</scope>
    <source>
        <strain>ATCC 1020 / DSM 3700 / CBS 544.65 / FGSC A1164 / JCM 1740 / NRRL 181 / WB 181</strain>
    </source>
</reference>
<keyword id="KW-0031">Aminopeptidase</keyword>
<keyword id="KW-0325">Glycoprotein</keyword>
<keyword id="KW-0378">Hydrolase</keyword>
<keyword id="KW-0472">Membrane</keyword>
<keyword id="KW-0645">Protease</keyword>
<keyword id="KW-1185">Reference proteome</keyword>
<keyword id="KW-0720">Serine protease</keyword>
<keyword id="KW-0735">Signal-anchor</keyword>
<keyword id="KW-0812">Transmembrane</keyword>
<keyword id="KW-1133">Transmembrane helix</keyword>
<keyword id="KW-0926">Vacuole</keyword>
<sequence length="919" mass="102984">MRPSDDHGETSEFLPITRSRSVSAASQTSTDSSLSTESLFPGEQKPFPNVNGTMALADDDQYRDLEDGEVEQTEPFLASSKKAATGGGRARRIFWILVLLCLGGWLLAFALFLTGGRANYQTASDALQAHGADSALGSTSTSSGKPVTLQQVLAGQWNPRYHAIGWVAGPNNEDGLLVEKGGDEKQGYLRVDDIRSRKGNDTGRESRVLMWKPIVHVDGKAIVPSNVWPSPDLKKVLLISEQQKNWRHSFTGKYWVLDVDSQTAQPLDPSAPDGRVQLALWSPASDAVVFVRDNNLYLRRLSSDSVVVITKDGGENLFYGVPDWVYEEEVISGNSVTWWSNDAKYIAFFRTNETSVPEFPVQYYISRPSGKKPLPGLENYPDVREIKYPKPGAPNPVVDLQFYDVDKNEVFSVEVADDFADDDRIIIEVLWASEGKVLVRSTNRESDILKVYLIDTKSRTGKLVRSEDVAGLDGGWVEPSQSTRFIPADPNNGRPHDGYIDTVPYNGYDHLAYFSPLDSPNALMLTSGEWEVVDAPAAVDLQRGLVYFVGTREAPTQRHVYRVQLDGSNLKPLTDTSKPGYYDVSFSHGTGYALLTYKGPSIPWQAIIKTQGDEITYEDRIEDNAQLTKMVEAYALPTEIYQNVTVDGYTLQLVERRPPHFNPAKKYPVLFYLYGGPGSQTVDRKFTVDFQSYVASSLGYIVVTVDGRGTGFIGRKARCIVRGNLGFYEAHDQIATAKMWAAKSYVDETRMAIWGWSFGGFMTLKTLEQDAGQTFQYGMAVAPVTDWRFYDSIYTERYMHTPQHNPSGYDNSTITDMAALSESVRFLVMHGASDDNVHLQNTLVLIDKLDLSNVENYDLQFYPDSDHSIYFHNAHTMVYDRLSDWLVNAFNGEWHLIAKPVPDESMWERMKRSLPLLYP</sequence>
<comment type="function">
    <text evidence="1">Type IV dipeptidyl-peptidase which removes N-terminal dipeptides sequentially from polypeptides having unsubstituted N-termini provided that the penultimate residue is proline.</text>
</comment>
<comment type="catalytic activity">
    <reaction>
        <text>Release of an N-terminal dipeptide, Xaa-Yaa-|-Zaa-, from a polypeptide, preferentially when Yaa is Pro, provided Zaa is neither Pro nor hydroxyproline.</text>
        <dbReference type="EC" id="3.4.14.5"/>
    </reaction>
</comment>
<comment type="subcellular location">
    <subcellularLocation>
        <location evidence="1">Vacuole membrane</location>
        <topology evidence="1">Single-pass type II membrane protein</topology>
    </subcellularLocation>
    <text evidence="1">Lysosome-like vacuoles.</text>
</comment>
<comment type="similarity">
    <text evidence="4">Belongs to the peptidase S9B family.</text>
</comment>
<feature type="chain" id="PRO_0000412151" description="Probable dipeptidyl-aminopeptidase B">
    <location>
        <begin position="1"/>
        <end position="919"/>
    </location>
</feature>
<feature type="topological domain" description="Cytoplasmic" evidence="2">
    <location>
        <begin position="1"/>
        <end position="92"/>
    </location>
</feature>
<feature type="transmembrane region" description="Helical; Signal-anchor for type II membrane protein" evidence="2">
    <location>
        <begin position="93"/>
        <end position="113"/>
    </location>
</feature>
<feature type="topological domain" description="Vacuolar" evidence="2">
    <location>
        <begin position="114"/>
        <end position="919"/>
    </location>
</feature>
<feature type="region of interest" description="Disordered" evidence="3">
    <location>
        <begin position="1"/>
        <end position="50"/>
    </location>
</feature>
<feature type="compositionally biased region" description="Basic and acidic residues" evidence="3">
    <location>
        <begin position="1"/>
        <end position="10"/>
    </location>
</feature>
<feature type="compositionally biased region" description="Low complexity" evidence="3">
    <location>
        <begin position="21"/>
        <end position="38"/>
    </location>
</feature>
<feature type="active site" description="Charge relay system" evidence="1">
    <location>
        <position position="757"/>
    </location>
</feature>
<feature type="active site" description="Charge relay system" evidence="1">
    <location>
        <position position="834"/>
    </location>
</feature>
<feature type="active site" description="Charge relay system" evidence="1">
    <location>
        <position position="867"/>
    </location>
</feature>
<feature type="glycosylation site" description="N-linked (GlcNAc...) asparagine" evidence="2">
    <location>
        <position position="200"/>
    </location>
</feature>
<feature type="glycosylation site" description="N-linked (GlcNAc...) asparagine" evidence="2">
    <location>
        <position position="352"/>
    </location>
</feature>
<feature type="glycosylation site" description="N-linked (GlcNAc...) asparagine" evidence="2">
    <location>
        <position position="643"/>
    </location>
</feature>
<feature type="glycosylation site" description="N-linked (GlcNAc...) asparagine" evidence="2">
    <location>
        <position position="811"/>
    </location>
</feature>
<gene>
    <name type="primary">dapB</name>
    <name type="ORF">NFIA_069310</name>
</gene>
<dbReference type="EC" id="3.4.14.5"/>
<dbReference type="EMBL" id="DS027690">
    <property type="protein sequence ID" value="EAW21760.1"/>
    <property type="molecule type" value="Genomic_DNA"/>
</dbReference>
<dbReference type="RefSeq" id="XP_001263657.1">
    <property type="nucleotide sequence ID" value="XM_001263656.1"/>
</dbReference>
<dbReference type="SMR" id="A1D7R6"/>
<dbReference type="STRING" id="331117.A1D7R6"/>
<dbReference type="ESTHER" id="aspfu-q4wx13">
    <property type="family name" value="DPP4N_Peptidase_S9"/>
</dbReference>
<dbReference type="MEROPS" id="S09.006"/>
<dbReference type="GlyCosmos" id="A1D7R6">
    <property type="glycosylation" value="4 sites, No reported glycans"/>
</dbReference>
<dbReference type="EnsemblFungi" id="EAW21760">
    <property type="protein sequence ID" value="EAW21760"/>
    <property type="gene ID" value="NFIA_069310"/>
</dbReference>
<dbReference type="GeneID" id="4590303"/>
<dbReference type="KEGG" id="nfi:NFIA_069310"/>
<dbReference type="VEuPathDB" id="FungiDB:NFIA_069310"/>
<dbReference type="eggNOG" id="KOG2100">
    <property type="taxonomic scope" value="Eukaryota"/>
</dbReference>
<dbReference type="HOGENOM" id="CLU_006105_0_1_1"/>
<dbReference type="OMA" id="MRTPQEN"/>
<dbReference type="OrthoDB" id="16520at2759"/>
<dbReference type="Proteomes" id="UP000006702">
    <property type="component" value="Unassembled WGS sequence"/>
</dbReference>
<dbReference type="GO" id="GO:0000329">
    <property type="term" value="C:fungal-type vacuole membrane"/>
    <property type="evidence" value="ECO:0007669"/>
    <property type="project" value="EnsemblFungi"/>
</dbReference>
<dbReference type="GO" id="GO:0005886">
    <property type="term" value="C:plasma membrane"/>
    <property type="evidence" value="ECO:0007669"/>
    <property type="project" value="TreeGrafter"/>
</dbReference>
<dbReference type="GO" id="GO:0004177">
    <property type="term" value="F:aminopeptidase activity"/>
    <property type="evidence" value="ECO:0007669"/>
    <property type="project" value="UniProtKB-KW"/>
</dbReference>
<dbReference type="GO" id="GO:0008239">
    <property type="term" value="F:dipeptidyl-peptidase activity"/>
    <property type="evidence" value="ECO:0007669"/>
    <property type="project" value="UniProtKB-EC"/>
</dbReference>
<dbReference type="GO" id="GO:0008236">
    <property type="term" value="F:serine-type peptidase activity"/>
    <property type="evidence" value="ECO:0007669"/>
    <property type="project" value="UniProtKB-KW"/>
</dbReference>
<dbReference type="GO" id="GO:0006508">
    <property type="term" value="P:proteolysis"/>
    <property type="evidence" value="ECO:0007669"/>
    <property type="project" value="UniProtKB-KW"/>
</dbReference>
<dbReference type="FunFam" id="3.40.50.1820:FF:000003">
    <property type="entry name" value="Dipeptidyl peptidase 4"/>
    <property type="match status" value="1"/>
</dbReference>
<dbReference type="Gene3D" id="3.40.50.1820">
    <property type="entry name" value="alpha/beta hydrolase"/>
    <property type="match status" value="1"/>
</dbReference>
<dbReference type="Gene3D" id="2.140.10.30">
    <property type="entry name" value="Dipeptidylpeptidase IV, N-terminal domain"/>
    <property type="match status" value="1"/>
</dbReference>
<dbReference type="InterPro" id="IPR029058">
    <property type="entry name" value="AB_hydrolase_fold"/>
</dbReference>
<dbReference type="InterPro" id="IPR001375">
    <property type="entry name" value="Peptidase_S9_cat"/>
</dbReference>
<dbReference type="InterPro" id="IPR002469">
    <property type="entry name" value="Peptidase_S9B_N"/>
</dbReference>
<dbReference type="InterPro" id="IPR050278">
    <property type="entry name" value="Serine_Prot_S9B/DPPIV"/>
</dbReference>
<dbReference type="PANTHER" id="PTHR11731:SF200">
    <property type="entry name" value="DIPEPTIDYL PEPTIDASE 10, ISOFORM B"/>
    <property type="match status" value="1"/>
</dbReference>
<dbReference type="PANTHER" id="PTHR11731">
    <property type="entry name" value="PROTEASE FAMILY S9B,C DIPEPTIDYL-PEPTIDASE IV-RELATED"/>
    <property type="match status" value="1"/>
</dbReference>
<dbReference type="Pfam" id="PF00930">
    <property type="entry name" value="DPPIV_N"/>
    <property type="match status" value="1"/>
</dbReference>
<dbReference type="Pfam" id="PF00326">
    <property type="entry name" value="Peptidase_S9"/>
    <property type="match status" value="1"/>
</dbReference>
<dbReference type="SUPFAM" id="SSF53474">
    <property type="entry name" value="alpha/beta-Hydrolases"/>
    <property type="match status" value="1"/>
</dbReference>
<dbReference type="SUPFAM" id="SSF82171">
    <property type="entry name" value="DPP6 N-terminal domain-like"/>
    <property type="match status" value="1"/>
</dbReference>